<dbReference type="EMBL" id="AE014075">
    <property type="protein sequence ID" value="AAN83107.1"/>
    <property type="molecule type" value="Genomic_DNA"/>
</dbReference>
<dbReference type="RefSeq" id="WP_000102319.1">
    <property type="nucleotide sequence ID" value="NZ_CP051263.1"/>
</dbReference>
<dbReference type="STRING" id="199310.c4675"/>
<dbReference type="GeneID" id="75205465"/>
<dbReference type="KEGG" id="ecc:c4675"/>
<dbReference type="eggNOG" id="COG3158">
    <property type="taxonomic scope" value="Bacteria"/>
</dbReference>
<dbReference type="HOGENOM" id="CLU_008142_4_2_6"/>
<dbReference type="BioCyc" id="ECOL199310:C4675-MONOMER"/>
<dbReference type="Proteomes" id="UP000001410">
    <property type="component" value="Chromosome"/>
</dbReference>
<dbReference type="GO" id="GO:0005886">
    <property type="term" value="C:plasma membrane"/>
    <property type="evidence" value="ECO:0007669"/>
    <property type="project" value="UniProtKB-SubCell"/>
</dbReference>
<dbReference type="GO" id="GO:0015079">
    <property type="term" value="F:potassium ion transmembrane transporter activity"/>
    <property type="evidence" value="ECO:0007669"/>
    <property type="project" value="UniProtKB-UniRule"/>
</dbReference>
<dbReference type="GO" id="GO:0015293">
    <property type="term" value="F:symporter activity"/>
    <property type="evidence" value="ECO:0007669"/>
    <property type="project" value="UniProtKB-UniRule"/>
</dbReference>
<dbReference type="HAMAP" id="MF_01522">
    <property type="entry name" value="Kup"/>
    <property type="match status" value="1"/>
</dbReference>
<dbReference type="InterPro" id="IPR003855">
    <property type="entry name" value="K+_transporter"/>
</dbReference>
<dbReference type="InterPro" id="IPR053952">
    <property type="entry name" value="K_trans_C"/>
</dbReference>
<dbReference type="InterPro" id="IPR053951">
    <property type="entry name" value="K_trans_N"/>
</dbReference>
<dbReference type="InterPro" id="IPR023051">
    <property type="entry name" value="Kup"/>
</dbReference>
<dbReference type="NCBIfam" id="TIGR00794">
    <property type="entry name" value="kup"/>
    <property type="match status" value="1"/>
</dbReference>
<dbReference type="NCBIfam" id="NF008015">
    <property type="entry name" value="PRK10745.1"/>
    <property type="match status" value="1"/>
</dbReference>
<dbReference type="PANTHER" id="PTHR30540:SF79">
    <property type="entry name" value="LOW AFFINITY POTASSIUM TRANSPORT SYSTEM PROTEIN KUP"/>
    <property type="match status" value="1"/>
</dbReference>
<dbReference type="PANTHER" id="PTHR30540">
    <property type="entry name" value="OSMOTIC STRESS POTASSIUM TRANSPORTER"/>
    <property type="match status" value="1"/>
</dbReference>
<dbReference type="Pfam" id="PF02705">
    <property type="entry name" value="K_trans"/>
    <property type="match status" value="1"/>
</dbReference>
<dbReference type="Pfam" id="PF22776">
    <property type="entry name" value="K_trans_C"/>
    <property type="match status" value="1"/>
</dbReference>
<sequence length="622" mass="69294">MSTDNKQSLPAITLAAIGVVYGDIGTSPLYTLRECLSGQFGFGVERDAVFGFLSLIFWLLIFVVSIKYLTFVMRADNAGEGGILTLMSLAGRNTSARTTSMLVIMGLIGGSFFYGEVVITPAISVMSAIEGLEIVAPQLDTWIVPLSIIVLTLLFMIQKHGTAMVGKLFAPIMLTWFLILAGLGLRSIIANPEVLHALNPMWAVHFFLEYKTVSFIALGAVVLSITGVEALYADMGHFGKFPIRLAWFTVVLPSLTLNYFGQGALLLKNPEAIKNPFFLLAPDWALIPLLIIAALATVIASQAVISGVFSLTRQAVRLGYLSPMRIIHTSEMESGQIYIPFVNWMLYVAVVIVIVSFEHSSNLAAAYGIAVTGTMVLTSILSTTVARQNWHWNKYFVALILIAFLCVDIPLFTANLDKLLSGGWLPLSLGTVMFIVMTTWKSERFRLLRRMHEHGNSLEAMIASLEKSPPVRVPGTAVYMSRAINVIPFALMHNLKHNKVLHERVILLTLRTEDAPYVHNVRRVQIEQLSPTFWRVVASYGWRETPNVEEVFHRCGLEGLSCRMMETSFFMSHESLILGKRPWYLRLRGKLYLLLQRNALRAPDQFEIPPNRVIELGTQVEI</sequence>
<keyword id="KW-0997">Cell inner membrane</keyword>
<keyword id="KW-1003">Cell membrane</keyword>
<keyword id="KW-0406">Ion transport</keyword>
<keyword id="KW-0472">Membrane</keyword>
<keyword id="KW-0630">Potassium</keyword>
<keyword id="KW-0633">Potassium transport</keyword>
<keyword id="KW-1185">Reference proteome</keyword>
<keyword id="KW-0769">Symport</keyword>
<keyword id="KW-0812">Transmembrane</keyword>
<keyword id="KW-1133">Transmembrane helix</keyword>
<keyword id="KW-0813">Transport</keyword>
<accession>P63184</accession>
<accession>P30016</accession>
<accession>P76748</accession>
<name>KUP_ECOL6</name>
<proteinExistence type="inferred from homology"/>
<feature type="chain" id="PRO_0000209012" description="Low affinity potassium transport system protein Kup">
    <location>
        <begin position="1"/>
        <end position="622"/>
    </location>
</feature>
<feature type="transmembrane region" description="Helical" evidence="1">
    <location>
        <begin position="9"/>
        <end position="29"/>
    </location>
</feature>
<feature type="transmembrane region" description="Helical" evidence="1">
    <location>
        <begin position="49"/>
        <end position="69"/>
    </location>
</feature>
<feature type="transmembrane region" description="Helical" evidence="1">
    <location>
        <begin position="103"/>
        <end position="123"/>
    </location>
</feature>
<feature type="transmembrane region" description="Helical" evidence="1">
    <location>
        <begin position="137"/>
        <end position="157"/>
    </location>
</feature>
<feature type="transmembrane region" description="Helical" evidence="1">
    <location>
        <begin position="165"/>
        <end position="185"/>
    </location>
</feature>
<feature type="transmembrane region" description="Helical" evidence="1">
    <location>
        <begin position="213"/>
        <end position="233"/>
    </location>
</feature>
<feature type="transmembrane region" description="Helical" evidence="1">
    <location>
        <begin position="247"/>
        <end position="267"/>
    </location>
</feature>
<feature type="transmembrane region" description="Helical" evidence="1">
    <location>
        <begin position="276"/>
        <end position="296"/>
    </location>
</feature>
<feature type="transmembrane region" description="Helical" evidence="1">
    <location>
        <begin position="337"/>
        <end position="357"/>
    </location>
</feature>
<feature type="transmembrane region" description="Helical" evidence="1">
    <location>
        <begin position="363"/>
        <end position="383"/>
    </location>
</feature>
<feature type="transmembrane region" description="Helical" evidence="1">
    <location>
        <begin position="396"/>
        <end position="416"/>
    </location>
</feature>
<feature type="transmembrane region" description="Helical" evidence="1">
    <location>
        <begin position="419"/>
        <end position="439"/>
    </location>
</feature>
<gene>
    <name evidence="1" type="primary">kup</name>
    <name type="synonym">trkD</name>
    <name type="ordered locus">c4675</name>
</gene>
<comment type="function">
    <text evidence="1">Responsible for the low-affinity transport of potassium into the cell. Likely operates as a K(+):H(+) symporter.</text>
</comment>
<comment type="catalytic activity">
    <reaction evidence="1">
        <text>K(+)(in) + H(+)(in) = K(+)(out) + H(+)(out)</text>
        <dbReference type="Rhea" id="RHEA:28490"/>
        <dbReference type="ChEBI" id="CHEBI:15378"/>
        <dbReference type="ChEBI" id="CHEBI:29103"/>
    </reaction>
    <physiologicalReaction direction="right-to-left" evidence="1">
        <dbReference type="Rhea" id="RHEA:28492"/>
    </physiologicalReaction>
</comment>
<comment type="subcellular location">
    <subcellularLocation>
        <location evidence="1">Cell inner membrane</location>
        <topology evidence="1">Multi-pass membrane protein</topology>
    </subcellularLocation>
</comment>
<comment type="similarity">
    <text evidence="1 2">Belongs to the HAK/KUP transporter (TC 2.A.72) family.</text>
</comment>
<reference key="1">
    <citation type="journal article" date="2002" name="Proc. Natl. Acad. Sci. U.S.A.">
        <title>Extensive mosaic structure revealed by the complete genome sequence of uropathogenic Escherichia coli.</title>
        <authorList>
            <person name="Welch R.A."/>
            <person name="Burland V."/>
            <person name="Plunkett G. III"/>
            <person name="Redford P."/>
            <person name="Roesch P."/>
            <person name="Rasko D."/>
            <person name="Buckles E.L."/>
            <person name="Liou S.-R."/>
            <person name="Boutin A."/>
            <person name="Hackett J."/>
            <person name="Stroud D."/>
            <person name="Mayhew G.F."/>
            <person name="Rose D.J."/>
            <person name="Zhou S."/>
            <person name="Schwartz D.C."/>
            <person name="Perna N.T."/>
            <person name="Mobley H.L.T."/>
            <person name="Donnenberg M.S."/>
            <person name="Blattner F.R."/>
        </authorList>
    </citation>
    <scope>NUCLEOTIDE SEQUENCE [LARGE SCALE GENOMIC DNA]</scope>
    <source>
        <strain>CFT073 / ATCC 700928 / UPEC</strain>
    </source>
</reference>
<evidence type="ECO:0000255" key="1">
    <source>
        <dbReference type="HAMAP-Rule" id="MF_01522"/>
    </source>
</evidence>
<evidence type="ECO:0000305" key="2"/>
<organism>
    <name type="scientific">Escherichia coli O6:H1 (strain CFT073 / ATCC 700928 / UPEC)</name>
    <dbReference type="NCBI Taxonomy" id="199310"/>
    <lineage>
        <taxon>Bacteria</taxon>
        <taxon>Pseudomonadati</taxon>
        <taxon>Pseudomonadota</taxon>
        <taxon>Gammaproteobacteria</taxon>
        <taxon>Enterobacterales</taxon>
        <taxon>Enterobacteriaceae</taxon>
        <taxon>Escherichia</taxon>
    </lineage>
</organism>
<protein>
    <recommendedName>
        <fullName evidence="1">Low affinity potassium transport system protein Kup</fullName>
    </recommendedName>
    <alternativeName>
        <fullName evidence="1">Kup system potassium uptake protein</fullName>
    </alternativeName>
</protein>